<reference key="1">
    <citation type="journal article" date="2005" name="Nature">
        <title>The genome sequence of the rice blast fungus Magnaporthe grisea.</title>
        <authorList>
            <person name="Dean R.A."/>
            <person name="Talbot N.J."/>
            <person name="Ebbole D.J."/>
            <person name="Farman M.L."/>
            <person name="Mitchell T.K."/>
            <person name="Orbach M.J."/>
            <person name="Thon M.R."/>
            <person name="Kulkarni R."/>
            <person name="Xu J.-R."/>
            <person name="Pan H."/>
            <person name="Read N.D."/>
            <person name="Lee Y.-H."/>
            <person name="Carbone I."/>
            <person name="Brown D."/>
            <person name="Oh Y.Y."/>
            <person name="Donofrio N."/>
            <person name="Jeong J.S."/>
            <person name="Soanes D.M."/>
            <person name="Djonovic S."/>
            <person name="Kolomiets E."/>
            <person name="Rehmeyer C."/>
            <person name="Li W."/>
            <person name="Harding M."/>
            <person name="Kim S."/>
            <person name="Lebrun M.-H."/>
            <person name="Bohnert H."/>
            <person name="Coughlan S."/>
            <person name="Butler J."/>
            <person name="Calvo S.E."/>
            <person name="Ma L.-J."/>
            <person name="Nicol R."/>
            <person name="Purcell S."/>
            <person name="Nusbaum C."/>
            <person name="Galagan J.E."/>
            <person name="Birren B.W."/>
        </authorList>
    </citation>
    <scope>NUCLEOTIDE SEQUENCE [LARGE SCALE GENOMIC DNA]</scope>
    <source>
        <strain>70-15 / ATCC MYA-4617 / FGSC 8958</strain>
    </source>
</reference>
<protein>
    <recommendedName>
        <fullName>Mitochondrial inner membrane protease ATP23</fullName>
        <ecNumber>3.4.24.-</ecNumber>
    </recommendedName>
</protein>
<dbReference type="EC" id="3.4.24.-"/>
<dbReference type="EMBL" id="CM001235">
    <property type="protein sequence ID" value="EHA48998.1"/>
    <property type="molecule type" value="Genomic_DNA"/>
</dbReference>
<dbReference type="RefSeq" id="XP_003718582.1">
    <property type="nucleotide sequence ID" value="XM_003718534.1"/>
</dbReference>
<dbReference type="FunCoup" id="A4RF31">
    <property type="interactions" value="490"/>
</dbReference>
<dbReference type="STRING" id="242507.A4RF31"/>
<dbReference type="MEROPS" id="M76.002"/>
<dbReference type="EnsemblFungi" id="MGG_00480T0">
    <property type="protein sequence ID" value="MGG_00480T0"/>
    <property type="gene ID" value="MGG_00480"/>
</dbReference>
<dbReference type="GeneID" id="2674715"/>
<dbReference type="KEGG" id="mgr:MGG_00480"/>
<dbReference type="VEuPathDB" id="FungiDB:MGG_00480"/>
<dbReference type="eggNOG" id="KOG3314">
    <property type="taxonomic scope" value="Eukaryota"/>
</dbReference>
<dbReference type="HOGENOM" id="CLU_079125_0_0_1"/>
<dbReference type="InParanoid" id="A4RF31"/>
<dbReference type="OMA" id="EAHQNCV"/>
<dbReference type="OrthoDB" id="285308at2759"/>
<dbReference type="Proteomes" id="UP000009058">
    <property type="component" value="Chromosome 5"/>
</dbReference>
<dbReference type="GO" id="GO:0005743">
    <property type="term" value="C:mitochondrial inner membrane"/>
    <property type="evidence" value="ECO:0007669"/>
    <property type="project" value="UniProtKB-SubCell"/>
</dbReference>
<dbReference type="GO" id="GO:0046872">
    <property type="term" value="F:metal ion binding"/>
    <property type="evidence" value="ECO:0007669"/>
    <property type="project" value="UniProtKB-KW"/>
</dbReference>
<dbReference type="GO" id="GO:0004222">
    <property type="term" value="F:metalloendopeptidase activity"/>
    <property type="evidence" value="ECO:0007669"/>
    <property type="project" value="InterPro"/>
</dbReference>
<dbReference type="GO" id="GO:0034982">
    <property type="term" value="P:mitochondrial protein processing"/>
    <property type="evidence" value="ECO:0007669"/>
    <property type="project" value="TreeGrafter"/>
</dbReference>
<dbReference type="GO" id="GO:0033615">
    <property type="term" value="P:mitochondrial proton-transporting ATP synthase complex assembly"/>
    <property type="evidence" value="ECO:0007669"/>
    <property type="project" value="TreeGrafter"/>
</dbReference>
<dbReference type="InterPro" id="IPR019165">
    <property type="entry name" value="Peptidase_M76_ATP23"/>
</dbReference>
<dbReference type="PANTHER" id="PTHR21711">
    <property type="entry name" value="MITOCHONDRIAL INNER MEMBRANE PROTEASE"/>
    <property type="match status" value="1"/>
</dbReference>
<dbReference type="PANTHER" id="PTHR21711:SF0">
    <property type="entry name" value="MITOCHONDRIAL INNER MEMBRANE PROTEASE ATP23 HOMOLOG"/>
    <property type="match status" value="1"/>
</dbReference>
<dbReference type="Pfam" id="PF09768">
    <property type="entry name" value="Peptidase_M76"/>
    <property type="match status" value="1"/>
</dbReference>
<dbReference type="PROSITE" id="PS00142">
    <property type="entry name" value="ZINC_PROTEASE"/>
    <property type="match status" value="1"/>
</dbReference>
<proteinExistence type="inferred from homology"/>
<evidence type="ECO:0000250" key="1"/>
<evidence type="ECO:0000255" key="2">
    <source>
        <dbReference type="PROSITE-ProRule" id="PRU10095"/>
    </source>
</evidence>
<evidence type="ECO:0000256" key="3">
    <source>
        <dbReference type="SAM" id="MobiDB-lite"/>
    </source>
</evidence>
<evidence type="ECO:0000305" key="4"/>
<feature type="chain" id="PRO_0000330066" description="Mitochondrial inner membrane protease ATP23">
    <location>
        <begin position="1"/>
        <end position="273"/>
    </location>
</feature>
<feature type="region of interest" description="Disordered" evidence="3">
    <location>
        <begin position="1"/>
        <end position="33"/>
    </location>
</feature>
<feature type="compositionally biased region" description="Polar residues" evidence="3">
    <location>
        <begin position="1"/>
        <end position="11"/>
    </location>
</feature>
<feature type="compositionally biased region" description="Basic and acidic residues" evidence="3">
    <location>
        <begin position="17"/>
        <end position="27"/>
    </location>
</feature>
<feature type="active site" evidence="2">
    <location>
        <position position="171"/>
    </location>
</feature>
<feature type="binding site" evidence="1">
    <location>
        <position position="170"/>
    </location>
    <ligand>
        <name>a divalent metal cation</name>
        <dbReference type="ChEBI" id="CHEBI:60240"/>
        <note>catalytic</note>
    </ligand>
</feature>
<feature type="binding site" evidence="1">
    <location>
        <position position="174"/>
    </location>
    <ligand>
        <name>a divalent metal cation</name>
        <dbReference type="ChEBI" id="CHEBI:60240"/>
        <note>catalytic</note>
    </ligand>
</feature>
<gene>
    <name type="primary">ATP23</name>
    <name type="ORF">MGG_00480</name>
</gene>
<keyword id="KW-0378">Hydrolase</keyword>
<keyword id="KW-0472">Membrane</keyword>
<keyword id="KW-0479">Metal-binding</keyword>
<keyword id="KW-0482">Metalloprotease</keyword>
<keyword id="KW-0496">Mitochondrion</keyword>
<keyword id="KW-0999">Mitochondrion inner membrane</keyword>
<keyword id="KW-0645">Protease</keyword>
<keyword id="KW-1185">Reference proteome</keyword>
<sequence>MASPQDNTPSGATPKPQTHEETPDQVKLRINGGERLNIRKNNPAETGFDPATSKWVNYFKVLTGSMTKEGQFHYREHLYRTNEERDLRRCEEQRDWLFRYSPVVRYMRDQIRLLGGELDADNVVCRRCPSRLTADGRILGQAGGFSPQHGILVCANSIRDRKHLEDTLAHEMVHAYDHLRWQVDFVGEKDLRHAACTEIRASMLSGECRWTREAFGRGNWTVTQQFQNCVRSRAIMSVRARARCRDTEHATKVVNQVWDSCFSDTRPFDEIYK</sequence>
<accession>A4RF31</accession>
<accession>G4NBU0</accession>
<organism>
    <name type="scientific">Pyricularia oryzae (strain 70-15 / ATCC MYA-4617 / FGSC 8958)</name>
    <name type="common">Rice blast fungus</name>
    <name type="synonym">Magnaporthe oryzae</name>
    <dbReference type="NCBI Taxonomy" id="242507"/>
    <lineage>
        <taxon>Eukaryota</taxon>
        <taxon>Fungi</taxon>
        <taxon>Dikarya</taxon>
        <taxon>Ascomycota</taxon>
        <taxon>Pezizomycotina</taxon>
        <taxon>Sordariomycetes</taxon>
        <taxon>Sordariomycetidae</taxon>
        <taxon>Magnaporthales</taxon>
        <taxon>Pyriculariaceae</taxon>
        <taxon>Pyricularia</taxon>
    </lineage>
</organism>
<name>ATP23_PYRO7</name>
<comment type="function">
    <text evidence="1">Has a dual role in the assembly of mitochondrial ATPase. Acts as a protease that removes N-terminal residues of mitochondrial ATPase CF(0) subunit 6 at the intermembrane space side. Also involved in the correct assembly of the membrane-embedded ATPase CF(0) particle, probably mediating association of subunit 6 with the subunit 9 ring (By similarity).</text>
</comment>
<comment type="subcellular location">
    <subcellularLocation>
        <location>Mitochondrion inner membrane</location>
        <topology>Peripheral membrane protein</topology>
        <orientation>Intermembrane side</orientation>
    </subcellularLocation>
    <text evidence="1">Associates loosely with the inner membrane.</text>
</comment>
<comment type="similarity">
    <text evidence="4">Belongs to the peptidase M76 family.</text>
</comment>